<gene>
    <name type="primary">kapC</name>
    <name type="ORF">ATEG_07901</name>
</gene>
<organism>
    <name type="scientific">Aspergillus terreus (strain NIH 2624 / FGSC A1156)</name>
    <dbReference type="NCBI Taxonomy" id="341663"/>
    <lineage>
        <taxon>Eukaryota</taxon>
        <taxon>Fungi</taxon>
        <taxon>Dikarya</taxon>
        <taxon>Ascomycota</taxon>
        <taxon>Pezizomycotina</taxon>
        <taxon>Eurotiomycetes</taxon>
        <taxon>Eurotiomycetidae</taxon>
        <taxon>Eurotiales</taxon>
        <taxon>Aspergillaceae</taxon>
        <taxon>Aspergillus</taxon>
        <taxon>Aspergillus subgen. Circumdati</taxon>
    </lineage>
</organism>
<accession>Q0CEI3</accession>
<name>KAPC_ASPTN</name>
<keyword id="KW-0238">DNA-binding</keyword>
<keyword id="KW-0539">Nucleus</keyword>
<keyword id="KW-1185">Reference proteome</keyword>
<keyword id="KW-0804">Transcription</keyword>
<keyword id="KW-0805">Transcription regulation</keyword>
<proteinExistence type="inferred from homology"/>
<protein>
    <recommendedName>
        <fullName>Putative transcription factor kapC</fullName>
    </recommendedName>
</protein>
<feature type="chain" id="PRO_0000306818" description="Putative transcription factor kapC">
    <location>
        <begin position="1"/>
        <end position="286"/>
    </location>
</feature>
<feature type="domain" description="bZIP">
    <location>
        <begin position="102"/>
        <end position="165"/>
    </location>
</feature>
<feature type="region of interest" description="Disordered" evidence="2">
    <location>
        <begin position="1"/>
        <end position="120"/>
    </location>
</feature>
<feature type="region of interest" description="Basic motif" evidence="1">
    <location>
        <begin position="103"/>
        <end position="126"/>
    </location>
</feature>
<feature type="region of interest" description="Leucine-zipper" evidence="1">
    <location>
        <begin position="130"/>
        <end position="161"/>
    </location>
</feature>
<feature type="region of interest" description="Disordered" evidence="2">
    <location>
        <begin position="197"/>
        <end position="286"/>
    </location>
</feature>
<feature type="compositionally biased region" description="Pro residues" evidence="2">
    <location>
        <begin position="1"/>
        <end position="10"/>
    </location>
</feature>
<feature type="compositionally biased region" description="Low complexity" evidence="2">
    <location>
        <begin position="26"/>
        <end position="40"/>
    </location>
</feature>
<feature type="compositionally biased region" description="Pro residues" evidence="2">
    <location>
        <begin position="41"/>
        <end position="54"/>
    </location>
</feature>
<feature type="compositionally biased region" description="Polar residues" evidence="2">
    <location>
        <begin position="55"/>
        <end position="67"/>
    </location>
</feature>
<feature type="compositionally biased region" description="Pro residues" evidence="2">
    <location>
        <begin position="81"/>
        <end position="92"/>
    </location>
</feature>
<feature type="compositionally biased region" description="Low complexity" evidence="2">
    <location>
        <begin position="108"/>
        <end position="118"/>
    </location>
</feature>
<feature type="compositionally biased region" description="Low complexity" evidence="2">
    <location>
        <begin position="198"/>
        <end position="222"/>
    </location>
</feature>
<reference key="1">
    <citation type="submission" date="2005-09" db="EMBL/GenBank/DDBJ databases">
        <title>Annotation of the Aspergillus terreus NIH2624 genome.</title>
        <authorList>
            <person name="Birren B.W."/>
            <person name="Lander E.S."/>
            <person name="Galagan J.E."/>
            <person name="Nusbaum C."/>
            <person name="Devon K."/>
            <person name="Henn M."/>
            <person name="Ma L.-J."/>
            <person name="Jaffe D.B."/>
            <person name="Butler J."/>
            <person name="Alvarez P."/>
            <person name="Gnerre S."/>
            <person name="Grabherr M."/>
            <person name="Kleber M."/>
            <person name="Mauceli E.W."/>
            <person name="Brockman W."/>
            <person name="Rounsley S."/>
            <person name="Young S.K."/>
            <person name="LaButti K."/>
            <person name="Pushparaj V."/>
            <person name="DeCaprio D."/>
            <person name="Crawford M."/>
            <person name="Koehrsen M."/>
            <person name="Engels R."/>
            <person name="Montgomery P."/>
            <person name="Pearson M."/>
            <person name="Howarth C."/>
            <person name="Larson L."/>
            <person name="Luoma S."/>
            <person name="White J."/>
            <person name="Alvarado L."/>
            <person name="Kodira C.D."/>
            <person name="Zeng Q."/>
            <person name="Oleary S."/>
            <person name="Yandava C."/>
            <person name="Denning D.W."/>
            <person name="Nierman W.C."/>
            <person name="Milne T."/>
            <person name="Madden K."/>
        </authorList>
    </citation>
    <scope>NUCLEOTIDE SEQUENCE [LARGE SCALE GENOMIC DNA]</scope>
    <source>
        <strain>NIH 2624 / FGSC A1156</strain>
    </source>
</reference>
<dbReference type="EMBL" id="CH476604">
    <property type="protein sequence ID" value="EAU32163.1"/>
    <property type="status" value="ALT_SEQ"/>
    <property type="molecule type" value="Genomic_DNA"/>
</dbReference>
<dbReference type="RefSeq" id="XP_001216522.1">
    <property type="nucleotide sequence ID" value="XM_001216522.1"/>
</dbReference>
<dbReference type="SMR" id="Q0CEI3"/>
<dbReference type="STRING" id="341663.Q0CEI3"/>
<dbReference type="EnsemblFungi" id="EAU32163">
    <property type="protein sequence ID" value="EAU32163"/>
    <property type="gene ID" value="ATEG_07901"/>
</dbReference>
<dbReference type="GeneID" id="4323038"/>
<dbReference type="eggNOG" id="ENOG502SC5V">
    <property type="taxonomic scope" value="Eukaryota"/>
</dbReference>
<dbReference type="OrthoDB" id="2593073at2759"/>
<dbReference type="Proteomes" id="UP000007963">
    <property type="component" value="Unassembled WGS sequence"/>
</dbReference>
<dbReference type="GO" id="GO:0090575">
    <property type="term" value="C:RNA polymerase II transcription regulator complex"/>
    <property type="evidence" value="ECO:0007669"/>
    <property type="project" value="TreeGrafter"/>
</dbReference>
<dbReference type="GO" id="GO:0001228">
    <property type="term" value="F:DNA-binding transcription activator activity, RNA polymerase II-specific"/>
    <property type="evidence" value="ECO:0007669"/>
    <property type="project" value="TreeGrafter"/>
</dbReference>
<dbReference type="GO" id="GO:0000976">
    <property type="term" value="F:transcription cis-regulatory region binding"/>
    <property type="evidence" value="ECO:0007669"/>
    <property type="project" value="InterPro"/>
</dbReference>
<dbReference type="Gene3D" id="1.20.5.170">
    <property type="match status" value="1"/>
</dbReference>
<dbReference type="InterPro" id="IPR050936">
    <property type="entry name" value="AP-1-like"/>
</dbReference>
<dbReference type="InterPro" id="IPR004827">
    <property type="entry name" value="bZIP"/>
</dbReference>
<dbReference type="InterPro" id="IPR046347">
    <property type="entry name" value="bZIP_sf"/>
</dbReference>
<dbReference type="PANTHER" id="PTHR40621">
    <property type="entry name" value="TRANSCRIPTION FACTOR KAPC-RELATED"/>
    <property type="match status" value="1"/>
</dbReference>
<dbReference type="PANTHER" id="PTHR40621:SF11">
    <property type="entry name" value="TRANSCRIPTION FACTOR KAPC-RELATED"/>
    <property type="match status" value="1"/>
</dbReference>
<dbReference type="Pfam" id="PF00170">
    <property type="entry name" value="bZIP_1"/>
    <property type="match status" value="1"/>
</dbReference>
<dbReference type="SMART" id="SM00338">
    <property type="entry name" value="BRLZ"/>
    <property type="match status" value="1"/>
</dbReference>
<dbReference type="SUPFAM" id="SSF57959">
    <property type="entry name" value="Leucine zipper domain"/>
    <property type="match status" value="1"/>
</dbReference>
<dbReference type="PROSITE" id="PS00036">
    <property type="entry name" value="BZIP_BASIC"/>
    <property type="match status" value="1"/>
</dbReference>
<evidence type="ECO:0000250" key="1"/>
<evidence type="ECO:0000256" key="2">
    <source>
        <dbReference type="SAM" id="MobiDB-lite"/>
    </source>
</evidence>
<evidence type="ECO:0000305" key="3"/>
<sequence>MQPALAPAPHPSMQTSAQDHADQVLHDQLLAAHQHLSHPQQPRPQAPATQPPHMQPNTASPRDQNNIDPAISGSAILGAPPQTPPQPEPAPQESPKTYGKRPLSTSKRAAQNRAAQRAFRQRKESYIRKLEEQVKHQEAITEEYKALHAENYQLREYIINLQTRLLDSQGEVPELPGNIDLNQPRADLTLSAPELQRGNAASAGPAPAGPGPQQSQPNQNQGVGPNDDMNSLNRIAVAGLGMRKHPNEDANYLGNNFQARRPRTDDNQTGATETTKQEPDGLPVVS</sequence>
<comment type="function">
    <text evidence="1">Putative transcription factor.</text>
</comment>
<comment type="subcellular location">
    <subcellularLocation>
        <location evidence="1">Nucleus</location>
    </subcellularLocation>
</comment>
<comment type="similarity">
    <text evidence="3">Belongs to the bZIP family.</text>
</comment>
<comment type="sequence caution" evidence="3">
    <conflict type="erroneous gene model prediction">
        <sequence resource="EMBL-CDS" id="EAU32163"/>
    </conflict>
</comment>